<dbReference type="EMBL" id="AE015927">
    <property type="protein sequence ID" value="AAO37049.1"/>
    <property type="molecule type" value="Genomic_DNA"/>
</dbReference>
<dbReference type="RefSeq" id="WP_011100710.1">
    <property type="nucleotide sequence ID" value="NC_004557.1"/>
</dbReference>
<dbReference type="SMR" id="Q890P6"/>
<dbReference type="STRING" id="212717.CTC_02593"/>
<dbReference type="GeneID" id="24253836"/>
<dbReference type="KEGG" id="ctc:CTC_02593"/>
<dbReference type="HOGENOM" id="CLU_095071_2_1_9"/>
<dbReference type="OrthoDB" id="9806379at2"/>
<dbReference type="Proteomes" id="UP000001412">
    <property type="component" value="Chromosome"/>
</dbReference>
<dbReference type="GO" id="GO:0022625">
    <property type="term" value="C:cytosolic large ribosomal subunit"/>
    <property type="evidence" value="ECO:0007669"/>
    <property type="project" value="TreeGrafter"/>
</dbReference>
<dbReference type="GO" id="GO:0070180">
    <property type="term" value="F:large ribosomal subunit rRNA binding"/>
    <property type="evidence" value="ECO:0007669"/>
    <property type="project" value="TreeGrafter"/>
</dbReference>
<dbReference type="GO" id="GO:0003735">
    <property type="term" value="F:structural constituent of ribosome"/>
    <property type="evidence" value="ECO:0007669"/>
    <property type="project" value="InterPro"/>
</dbReference>
<dbReference type="GO" id="GO:0006412">
    <property type="term" value="P:translation"/>
    <property type="evidence" value="ECO:0007669"/>
    <property type="project" value="UniProtKB-UniRule"/>
</dbReference>
<dbReference type="CDD" id="cd00337">
    <property type="entry name" value="Ribosomal_uL14"/>
    <property type="match status" value="1"/>
</dbReference>
<dbReference type="FunFam" id="2.40.150.20:FF:000001">
    <property type="entry name" value="50S ribosomal protein L14"/>
    <property type="match status" value="1"/>
</dbReference>
<dbReference type="Gene3D" id="2.40.150.20">
    <property type="entry name" value="Ribosomal protein L14"/>
    <property type="match status" value="1"/>
</dbReference>
<dbReference type="HAMAP" id="MF_01367">
    <property type="entry name" value="Ribosomal_uL14"/>
    <property type="match status" value="1"/>
</dbReference>
<dbReference type="InterPro" id="IPR000218">
    <property type="entry name" value="Ribosomal_uL14"/>
</dbReference>
<dbReference type="InterPro" id="IPR005745">
    <property type="entry name" value="Ribosomal_uL14_bac-type"/>
</dbReference>
<dbReference type="InterPro" id="IPR019972">
    <property type="entry name" value="Ribosomal_uL14_CS"/>
</dbReference>
<dbReference type="InterPro" id="IPR036853">
    <property type="entry name" value="Ribosomal_uL14_sf"/>
</dbReference>
<dbReference type="NCBIfam" id="TIGR01067">
    <property type="entry name" value="rplN_bact"/>
    <property type="match status" value="1"/>
</dbReference>
<dbReference type="PANTHER" id="PTHR11761">
    <property type="entry name" value="50S/60S RIBOSOMAL PROTEIN L14/L23"/>
    <property type="match status" value="1"/>
</dbReference>
<dbReference type="PANTHER" id="PTHR11761:SF3">
    <property type="entry name" value="LARGE RIBOSOMAL SUBUNIT PROTEIN UL14M"/>
    <property type="match status" value="1"/>
</dbReference>
<dbReference type="Pfam" id="PF00238">
    <property type="entry name" value="Ribosomal_L14"/>
    <property type="match status" value="1"/>
</dbReference>
<dbReference type="SMART" id="SM01374">
    <property type="entry name" value="Ribosomal_L14"/>
    <property type="match status" value="1"/>
</dbReference>
<dbReference type="SUPFAM" id="SSF50193">
    <property type="entry name" value="Ribosomal protein L14"/>
    <property type="match status" value="1"/>
</dbReference>
<dbReference type="PROSITE" id="PS00049">
    <property type="entry name" value="RIBOSOMAL_L14"/>
    <property type="match status" value="1"/>
</dbReference>
<accession>Q890P6</accession>
<protein>
    <recommendedName>
        <fullName evidence="1">Large ribosomal subunit protein uL14</fullName>
    </recommendedName>
    <alternativeName>
        <fullName evidence="2">50S ribosomal protein L14</fullName>
    </alternativeName>
</protein>
<gene>
    <name evidence="1" type="primary">rplN</name>
    <name type="ordered locus">CTC_02593</name>
</gene>
<organism>
    <name type="scientific">Clostridium tetani (strain Massachusetts / E88)</name>
    <dbReference type="NCBI Taxonomy" id="212717"/>
    <lineage>
        <taxon>Bacteria</taxon>
        <taxon>Bacillati</taxon>
        <taxon>Bacillota</taxon>
        <taxon>Clostridia</taxon>
        <taxon>Eubacteriales</taxon>
        <taxon>Clostridiaceae</taxon>
        <taxon>Clostridium</taxon>
    </lineage>
</organism>
<proteinExistence type="inferred from homology"/>
<keyword id="KW-1185">Reference proteome</keyword>
<keyword id="KW-0687">Ribonucleoprotein</keyword>
<keyword id="KW-0689">Ribosomal protein</keyword>
<keyword id="KW-0694">RNA-binding</keyword>
<keyword id="KW-0699">rRNA-binding</keyword>
<name>RL14_CLOTE</name>
<comment type="function">
    <text evidence="1">Binds to 23S rRNA. Forms part of two intersubunit bridges in the 70S ribosome.</text>
</comment>
<comment type="subunit">
    <text evidence="1">Part of the 50S ribosomal subunit. Forms a cluster with proteins L3 and L19. In the 70S ribosome, L14 and L19 interact and together make contacts with the 16S rRNA in bridges B5 and B8.</text>
</comment>
<comment type="similarity">
    <text evidence="1">Belongs to the universal ribosomal protein uL14 family.</text>
</comment>
<sequence>MIQQQTTLKVADNSGARGIMCIKVLGGSNRRYANIGDIIVASVKSATPGGVVKKGEVVKAVVVRSKKGVRRADGSYIKFDENAAVIIKDDKQPKGTRIFGPVARELRDKEFNKILSLAPEVL</sequence>
<reference key="1">
    <citation type="journal article" date="2003" name="Proc. Natl. Acad. Sci. U.S.A.">
        <title>The genome sequence of Clostridium tetani, the causative agent of tetanus disease.</title>
        <authorList>
            <person name="Brueggemann H."/>
            <person name="Baeumer S."/>
            <person name="Fricke W.F."/>
            <person name="Wiezer A."/>
            <person name="Liesegang H."/>
            <person name="Decker I."/>
            <person name="Herzberg C."/>
            <person name="Martinez-Arias R."/>
            <person name="Merkl R."/>
            <person name="Henne A."/>
            <person name="Gottschalk G."/>
        </authorList>
    </citation>
    <scope>NUCLEOTIDE SEQUENCE [LARGE SCALE GENOMIC DNA]</scope>
    <source>
        <strain>Massachusetts / E88</strain>
    </source>
</reference>
<feature type="chain" id="PRO_1000055566" description="Large ribosomal subunit protein uL14">
    <location>
        <begin position="1"/>
        <end position="122"/>
    </location>
</feature>
<evidence type="ECO:0000255" key="1">
    <source>
        <dbReference type="HAMAP-Rule" id="MF_01367"/>
    </source>
</evidence>
<evidence type="ECO:0000305" key="2"/>